<proteinExistence type="inferred from homology"/>
<name>ASSY_GEOSL</name>
<dbReference type="EC" id="6.3.4.5" evidence="1"/>
<dbReference type="EMBL" id="AE017180">
    <property type="protein sequence ID" value="AAR33488.1"/>
    <property type="molecule type" value="Genomic_DNA"/>
</dbReference>
<dbReference type="RefSeq" id="NP_951215.1">
    <property type="nucleotide sequence ID" value="NC_002939.5"/>
</dbReference>
<dbReference type="RefSeq" id="WP_010940829.1">
    <property type="nucleotide sequence ID" value="NC_002939.5"/>
</dbReference>
<dbReference type="SMR" id="P61523"/>
<dbReference type="FunCoup" id="P61523">
    <property type="interactions" value="494"/>
</dbReference>
<dbReference type="STRING" id="243231.GSU0153"/>
<dbReference type="EnsemblBacteria" id="AAR33488">
    <property type="protein sequence ID" value="AAR33488"/>
    <property type="gene ID" value="GSU0153"/>
</dbReference>
<dbReference type="KEGG" id="gsu:GSU0153"/>
<dbReference type="PATRIC" id="fig|243231.5.peg.154"/>
<dbReference type="eggNOG" id="COG0137">
    <property type="taxonomic scope" value="Bacteria"/>
</dbReference>
<dbReference type="HOGENOM" id="CLU_032784_4_2_7"/>
<dbReference type="InParanoid" id="P61523"/>
<dbReference type="OrthoDB" id="9801641at2"/>
<dbReference type="UniPathway" id="UPA00068">
    <property type="reaction ID" value="UER00113"/>
</dbReference>
<dbReference type="Proteomes" id="UP000000577">
    <property type="component" value="Chromosome"/>
</dbReference>
<dbReference type="GO" id="GO:0005737">
    <property type="term" value="C:cytoplasm"/>
    <property type="evidence" value="ECO:0000318"/>
    <property type="project" value="GO_Central"/>
</dbReference>
<dbReference type="GO" id="GO:0004055">
    <property type="term" value="F:argininosuccinate synthase activity"/>
    <property type="evidence" value="ECO:0000318"/>
    <property type="project" value="GO_Central"/>
</dbReference>
<dbReference type="GO" id="GO:0005524">
    <property type="term" value="F:ATP binding"/>
    <property type="evidence" value="ECO:0007669"/>
    <property type="project" value="UniProtKB-UniRule"/>
</dbReference>
<dbReference type="GO" id="GO:0000053">
    <property type="term" value="P:argininosuccinate metabolic process"/>
    <property type="evidence" value="ECO:0000318"/>
    <property type="project" value="GO_Central"/>
</dbReference>
<dbReference type="GO" id="GO:0006526">
    <property type="term" value="P:L-arginine biosynthetic process"/>
    <property type="evidence" value="ECO:0000318"/>
    <property type="project" value="GO_Central"/>
</dbReference>
<dbReference type="GO" id="GO:0000050">
    <property type="term" value="P:urea cycle"/>
    <property type="evidence" value="ECO:0000318"/>
    <property type="project" value="GO_Central"/>
</dbReference>
<dbReference type="CDD" id="cd01999">
    <property type="entry name" value="ASS"/>
    <property type="match status" value="1"/>
</dbReference>
<dbReference type="FunFam" id="3.40.50.620:FF:000019">
    <property type="entry name" value="Argininosuccinate synthase"/>
    <property type="match status" value="1"/>
</dbReference>
<dbReference type="FunFam" id="3.90.1260.10:FF:000007">
    <property type="entry name" value="Argininosuccinate synthase"/>
    <property type="match status" value="1"/>
</dbReference>
<dbReference type="Gene3D" id="3.90.1260.10">
    <property type="entry name" value="Argininosuccinate synthetase, chain A, domain 2"/>
    <property type="match status" value="1"/>
</dbReference>
<dbReference type="Gene3D" id="3.40.50.620">
    <property type="entry name" value="HUPs"/>
    <property type="match status" value="1"/>
</dbReference>
<dbReference type="Gene3D" id="1.20.5.470">
    <property type="entry name" value="Single helix bin"/>
    <property type="match status" value="1"/>
</dbReference>
<dbReference type="HAMAP" id="MF_00005">
    <property type="entry name" value="Arg_succ_synth_type1"/>
    <property type="match status" value="1"/>
</dbReference>
<dbReference type="InterPro" id="IPR048268">
    <property type="entry name" value="Arginosuc_syn_C"/>
</dbReference>
<dbReference type="InterPro" id="IPR048267">
    <property type="entry name" value="Arginosuc_syn_N"/>
</dbReference>
<dbReference type="InterPro" id="IPR001518">
    <property type="entry name" value="Arginosuc_synth"/>
</dbReference>
<dbReference type="InterPro" id="IPR018223">
    <property type="entry name" value="Arginosuc_synth_CS"/>
</dbReference>
<dbReference type="InterPro" id="IPR023434">
    <property type="entry name" value="Arginosuc_synth_type_1_subfam"/>
</dbReference>
<dbReference type="InterPro" id="IPR024074">
    <property type="entry name" value="AS_cat/multimer_dom_body"/>
</dbReference>
<dbReference type="InterPro" id="IPR014729">
    <property type="entry name" value="Rossmann-like_a/b/a_fold"/>
</dbReference>
<dbReference type="NCBIfam" id="TIGR00032">
    <property type="entry name" value="argG"/>
    <property type="match status" value="1"/>
</dbReference>
<dbReference type="NCBIfam" id="NF001770">
    <property type="entry name" value="PRK00509.1"/>
    <property type="match status" value="1"/>
</dbReference>
<dbReference type="PANTHER" id="PTHR11587">
    <property type="entry name" value="ARGININOSUCCINATE SYNTHASE"/>
    <property type="match status" value="1"/>
</dbReference>
<dbReference type="PANTHER" id="PTHR11587:SF2">
    <property type="entry name" value="ARGININOSUCCINATE SYNTHASE"/>
    <property type="match status" value="1"/>
</dbReference>
<dbReference type="Pfam" id="PF20979">
    <property type="entry name" value="Arginosuc_syn_C"/>
    <property type="match status" value="1"/>
</dbReference>
<dbReference type="Pfam" id="PF00764">
    <property type="entry name" value="Arginosuc_synth"/>
    <property type="match status" value="1"/>
</dbReference>
<dbReference type="SUPFAM" id="SSF52402">
    <property type="entry name" value="Adenine nucleotide alpha hydrolases-like"/>
    <property type="match status" value="1"/>
</dbReference>
<dbReference type="SUPFAM" id="SSF69864">
    <property type="entry name" value="Argininosuccinate synthetase, C-terminal domain"/>
    <property type="match status" value="1"/>
</dbReference>
<dbReference type="PROSITE" id="PS00564">
    <property type="entry name" value="ARGININOSUCCIN_SYN_1"/>
    <property type="match status" value="1"/>
</dbReference>
<dbReference type="PROSITE" id="PS00565">
    <property type="entry name" value="ARGININOSUCCIN_SYN_2"/>
    <property type="match status" value="1"/>
</dbReference>
<keyword id="KW-0028">Amino-acid biosynthesis</keyword>
<keyword id="KW-0055">Arginine biosynthesis</keyword>
<keyword id="KW-0067">ATP-binding</keyword>
<keyword id="KW-0963">Cytoplasm</keyword>
<keyword id="KW-0436">Ligase</keyword>
<keyword id="KW-0547">Nucleotide-binding</keyword>
<keyword id="KW-1185">Reference proteome</keyword>
<feature type="chain" id="PRO_0000148595" description="Argininosuccinate synthase">
    <location>
        <begin position="1"/>
        <end position="406"/>
    </location>
</feature>
<feature type="binding site" evidence="1">
    <location>
        <begin position="14"/>
        <end position="22"/>
    </location>
    <ligand>
        <name>ATP</name>
        <dbReference type="ChEBI" id="CHEBI:30616"/>
    </ligand>
</feature>
<feature type="binding site" evidence="1">
    <location>
        <position position="41"/>
    </location>
    <ligand>
        <name>ATP</name>
        <dbReference type="ChEBI" id="CHEBI:30616"/>
    </ligand>
</feature>
<feature type="binding site" evidence="1">
    <location>
        <position position="92"/>
    </location>
    <ligand>
        <name>L-citrulline</name>
        <dbReference type="ChEBI" id="CHEBI:57743"/>
    </ligand>
</feature>
<feature type="binding site" evidence="1">
    <location>
        <position position="97"/>
    </location>
    <ligand>
        <name>L-citrulline</name>
        <dbReference type="ChEBI" id="CHEBI:57743"/>
    </ligand>
</feature>
<feature type="binding site" evidence="1">
    <location>
        <position position="122"/>
    </location>
    <ligand>
        <name>ATP</name>
        <dbReference type="ChEBI" id="CHEBI:30616"/>
    </ligand>
</feature>
<feature type="binding site" evidence="1">
    <location>
        <position position="124"/>
    </location>
    <ligand>
        <name>L-aspartate</name>
        <dbReference type="ChEBI" id="CHEBI:29991"/>
    </ligand>
</feature>
<feature type="binding site" evidence="1">
    <location>
        <position position="128"/>
    </location>
    <ligand>
        <name>L-aspartate</name>
        <dbReference type="ChEBI" id="CHEBI:29991"/>
    </ligand>
</feature>
<feature type="binding site" evidence="1">
    <location>
        <position position="128"/>
    </location>
    <ligand>
        <name>L-citrulline</name>
        <dbReference type="ChEBI" id="CHEBI:57743"/>
    </ligand>
</feature>
<feature type="binding site" evidence="1">
    <location>
        <position position="129"/>
    </location>
    <ligand>
        <name>L-aspartate</name>
        <dbReference type="ChEBI" id="CHEBI:29991"/>
    </ligand>
</feature>
<feature type="binding site" evidence="1">
    <location>
        <position position="132"/>
    </location>
    <ligand>
        <name>L-citrulline</name>
        <dbReference type="ChEBI" id="CHEBI:57743"/>
    </ligand>
</feature>
<feature type="binding site" evidence="1">
    <location>
        <position position="181"/>
    </location>
    <ligand>
        <name>L-citrulline</name>
        <dbReference type="ChEBI" id="CHEBI:57743"/>
    </ligand>
</feature>
<feature type="binding site" evidence="1">
    <location>
        <position position="190"/>
    </location>
    <ligand>
        <name>L-citrulline</name>
        <dbReference type="ChEBI" id="CHEBI:57743"/>
    </ligand>
</feature>
<feature type="binding site" evidence="1">
    <location>
        <position position="266"/>
    </location>
    <ligand>
        <name>L-citrulline</name>
        <dbReference type="ChEBI" id="CHEBI:57743"/>
    </ligand>
</feature>
<feature type="binding site" evidence="1">
    <location>
        <position position="278"/>
    </location>
    <ligand>
        <name>L-citrulline</name>
        <dbReference type="ChEBI" id="CHEBI:57743"/>
    </ligand>
</feature>
<reference key="1">
    <citation type="journal article" date="2003" name="Science">
        <title>Genome of Geobacter sulfurreducens: metal reduction in subsurface environments.</title>
        <authorList>
            <person name="Methe B.A."/>
            <person name="Nelson K.E."/>
            <person name="Eisen J.A."/>
            <person name="Paulsen I.T."/>
            <person name="Nelson W.C."/>
            <person name="Heidelberg J.F."/>
            <person name="Wu D."/>
            <person name="Wu M."/>
            <person name="Ward N.L."/>
            <person name="Beanan M.J."/>
            <person name="Dodson R.J."/>
            <person name="Madupu R."/>
            <person name="Brinkac L.M."/>
            <person name="Daugherty S.C."/>
            <person name="DeBoy R.T."/>
            <person name="Durkin A.S."/>
            <person name="Gwinn M.L."/>
            <person name="Kolonay J.F."/>
            <person name="Sullivan S.A."/>
            <person name="Haft D.H."/>
            <person name="Selengut J."/>
            <person name="Davidsen T.M."/>
            <person name="Zafar N."/>
            <person name="White O."/>
            <person name="Tran B."/>
            <person name="Romero C."/>
            <person name="Forberger H.A."/>
            <person name="Weidman J.F."/>
            <person name="Khouri H.M."/>
            <person name="Feldblyum T.V."/>
            <person name="Utterback T.R."/>
            <person name="Van Aken S.E."/>
            <person name="Lovley D.R."/>
            <person name="Fraser C.M."/>
        </authorList>
    </citation>
    <scope>NUCLEOTIDE SEQUENCE [LARGE SCALE GENOMIC DNA]</scope>
    <source>
        <strain>ATCC 51573 / DSM 12127 / PCA</strain>
    </source>
</reference>
<protein>
    <recommendedName>
        <fullName evidence="1">Argininosuccinate synthase</fullName>
        <ecNumber evidence="1">6.3.4.5</ecNumber>
    </recommendedName>
    <alternativeName>
        <fullName evidence="1">Citrulline--aspartate ligase</fullName>
    </alternativeName>
</protein>
<gene>
    <name evidence="1" type="primary">argG</name>
    <name type="ordered locus">GSU0153</name>
</gene>
<sequence>MAKAHKDVKKIVLAYSGGLDTSIILKWLKNEYGCEVIAFSADLGQGDELAPIRDKAIATGADKVYIDDLKEEFVKDFVFPMFRANAIYEGHYLLGTSIARPLIAKRQMEIAKIEGADAVSHGATGKGNDQVRFELAYYHFDPAITVVAPWREWKLNSRQALVNYARKNGIPIPVTKKRPWSSDRNLLHISFEGGILEDTWAEPPENMYVLTKAPEKAPNKPQFVEIEFKNGNAVAVDGEKMSPAQLLAHLNYIGGEHGIGRVDLLENRSVGMKSRGVYETPGGTILREAHSAVEQITMDREVMRIRDSLIPEYARQVYAGYWFSPEREMLQTLIDDSQKCVNGVARVKLYKGHCRTVGRKSETNSLFNLDFATFEKDQVFNQADATGFIKINSLRLRIRSLMQGKK</sequence>
<organism>
    <name type="scientific">Geobacter sulfurreducens (strain ATCC 51573 / DSM 12127 / PCA)</name>
    <dbReference type="NCBI Taxonomy" id="243231"/>
    <lineage>
        <taxon>Bacteria</taxon>
        <taxon>Pseudomonadati</taxon>
        <taxon>Thermodesulfobacteriota</taxon>
        <taxon>Desulfuromonadia</taxon>
        <taxon>Geobacterales</taxon>
        <taxon>Geobacteraceae</taxon>
        <taxon>Geobacter</taxon>
    </lineage>
</organism>
<comment type="catalytic activity">
    <reaction evidence="1">
        <text>L-citrulline + L-aspartate + ATP = 2-(N(omega)-L-arginino)succinate + AMP + diphosphate + H(+)</text>
        <dbReference type="Rhea" id="RHEA:10932"/>
        <dbReference type="ChEBI" id="CHEBI:15378"/>
        <dbReference type="ChEBI" id="CHEBI:29991"/>
        <dbReference type="ChEBI" id="CHEBI:30616"/>
        <dbReference type="ChEBI" id="CHEBI:33019"/>
        <dbReference type="ChEBI" id="CHEBI:57472"/>
        <dbReference type="ChEBI" id="CHEBI:57743"/>
        <dbReference type="ChEBI" id="CHEBI:456215"/>
        <dbReference type="EC" id="6.3.4.5"/>
    </reaction>
</comment>
<comment type="pathway">
    <text evidence="1">Amino-acid biosynthesis; L-arginine biosynthesis; L-arginine from L-ornithine and carbamoyl phosphate: step 2/3.</text>
</comment>
<comment type="subunit">
    <text evidence="1">Homotetramer.</text>
</comment>
<comment type="subcellular location">
    <subcellularLocation>
        <location evidence="1">Cytoplasm</location>
    </subcellularLocation>
</comment>
<comment type="similarity">
    <text evidence="1">Belongs to the argininosuccinate synthase family. Type 1 subfamily.</text>
</comment>
<accession>P61523</accession>
<evidence type="ECO:0000255" key="1">
    <source>
        <dbReference type="HAMAP-Rule" id="MF_00005"/>
    </source>
</evidence>